<dbReference type="EC" id="4.2.1.59" evidence="1"/>
<dbReference type="EMBL" id="CP000947">
    <property type="protein sequence ID" value="ACA31882.1"/>
    <property type="molecule type" value="Genomic_DNA"/>
</dbReference>
<dbReference type="RefSeq" id="WP_011609514.1">
    <property type="nucleotide sequence ID" value="NC_010519.1"/>
</dbReference>
<dbReference type="SMR" id="B0UW60"/>
<dbReference type="STRING" id="228400.HSM_0255"/>
<dbReference type="GeneID" id="31486535"/>
<dbReference type="KEGG" id="hsm:HSM_0255"/>
<dbReference type="HOGENOM" id="CLU_078912_1_0_6"/>
<dbReference type="GO" id="GO:0005737">
    <property type="term" value="C:cytoplasm"/>
    <property type="evidence" value="ECO:0007669"/>
    <property type="project" value="UniProtKB-SubCell"/>
</dbReference>
<dbReference type="GO" id="GO:0016020">
    <property type="term" value="C:membrane"/>
    <property type="evidence" value="ECO:0007669"/>
    <property type="project" value="GOC"/>
</dbReference>
<dbReference type="GO" id="GO:0019171">
    <property type="term" value="F:(3R)-hydroxyacyl-[acyl-carrier-protein] dehydratase activity"/>
    <property type="evidence" value="ECO:0007669"/>
    <property type="project" value="UniProtKB-EC"/>
</dbReference>
<dbReference type="GO" id="GO:0006633">
    <property type="term" value="P:fatty acid biosynthetic process"/>
    <property type="evidence" value="ECO:0007669"/>
    <property type="project" value="UniProtKB-UniRule"/>
</dbReference>
<dbReference type="GO" id="GO:0009245">
    <property type="term" value="P:lipid A biosynthetic process"/>
    <property type="evidence" value="ECO:0007669"/>
    <property type="project" value="UniProtKB-UniRule"/>
</dbReference>
<dbReference type="CDD" id="cd01288">
    <property type="entry name" value="FabZ"/>
    <property type="match status" value="1"/>
</dbReference>
<dbReference type="FunFam" id="3.10.129.10:FF:000001">
    <property type="entry name" value="3-hydroxyacyl-[acyl-carrier-protein] dehydratase FabZ"/>
    <property type="match status" value="1"/>
</dbReference>
<dbReference type="Gene3D" id="3.10.129.10">
    <property type="entry name" value="Hotdog Thioesterase"/>
    <property type="match status" value="1"/>
</dbReference>
<dbReference type="HAMAP" id="MF_00406">
    <property type="entry name" value="FabZ"/>
    <property type="match status" value="1"/>
</dbReference>
<dbReference type="InterPro" id="IPR013114">
    <property type="entry name" value="FabA_FabZ"/>
</dbReference>
<dbReference type="InterPro" id="IPR010084">
    <property type="entry name" value="FabZ"/>
</dbReference>
<dbReference type="InterPro" id="IPR029069">
    <property type="entry name" value="HotDog_dom_sf"/>
</dbReference>
<dbReference type="NCBIfam" id="TIGR01750">
    <property type="entry name" value="fabZ"/>
    <property type="match status" value="1"/>
</dbReference>
<dbReference type="NCBIfam" id="NF000582">
    <property type="entry name" value="PRK00006.1"/>
    <property type="match status" value="1"/>
</dbReference>
<dbReference type="PANTHER" id="PTHR30272">
    <property type="entry name" value="3-HYDROXYACYL-[ACYL-CARRIER-PROTEIN] DEHYDRATASE"/>
    <property type="match status" value="1"/>
</dbReference>
<dbReference type="PANTHER" id="PTHR30272:SF1">
    <property type="entry name" value="3-HYDROXYACYL-[ACYL-CARRIER-PROTEIN] DEHYDRATASE"/>
    <property type="match status" value="1"/>
</dbReference>
<dbReference type="Pfam" id="PF07977">
    <property type="entry name" value="FabA"/>
    <property type="match status" value="1"/>
</dbReference>
<dbReference type="SUPFAM" id="SSF54637">
    <property type="entry name" value="Thioesterase/thiol ester dehydrase-isomerase"/>
    <property type="match status" value="1"/>
</dbReference>
<reference key="1">
    <citation type="submission" date="2008-02" db="EMBL/GenBank/DDBJ databases">
        <title>Complete sequence of Haemophilus somnus 2336.</title>
        <authorList>
            <consortium name="US DOE Joint Genome Institute"/>
            <person name="Siddaramappa S."/>
            <person name="Duncan A.J."/>
            <person name="Challacombe J.F."/>
            <person name="Rainey D."/>
            <person name="Gillaspy A.F."/>
            <person name="Carson M."/>
            <person name="Gipson J."/>
            <person name="Gipson M."/>
            <person name="Bruce D."/>
            <person name="Detter J.C."/>
            <person name="Han C.S."/>
            <person name="Land M."/>
            <person name="Tapia R."/>
            <person name="Thompson L.S."/>
            <person name="Orvis J."/>
            <person name="Zaitshik J."/>
            <person name="Barnes G."/>
            <person name="Brettin T.S."/>
            <person name="Dyer D.W."/>
            <person name="Inzana T.J."/>
        </authorList>
    </citation>
    <scope>NUCLEOTIDE SEQUENCE [LARGE SCALE GENOMIC DNA]</scope>
    <source>
        <strain>2336</strain>
    </source>
</reference>
<gene>
    <name evidence="1" type="primary">fabZ</name>
    <name type="ordered locus">HSM_0255</name>
</gene>
<feature type="chain" id="PRO_0000340780" description="3-hydroxyacyl-[acyl-carrier-protein] dehydratase FabZ">
    <location>
        <begin position="1"/>
        <end position="151"/>
    </location>
</feature>
<feature type="active site" evidence="1">
    <location>
        <position position="58"/>
    </location>
</feature>
<name>FABZ_HISS2</name>
<proteinExistence type="inferred from homology"/>
<protein>
    <recommendedName>
        <fullName evidence="1">3-hydroxyacyl-[acyl-carrier-protein] dehydratase FabZ</fullName>
        <ecNumber evidence="1">4.2.1.59</ecNumber>
    </recommendedName>
    <alternativeName>
        <fullName evidence="1">(3R)-hydroxymyristoyl-[acyl-carrier-protein] dehydratase</fullName>
        <shortName evidence="1">(3R)-hydroxymyristoyl-ACP dehydrase</shortName>
    </alternativeName>
    <alternativeName>
        <fullName evidence="1">Beta-hydroxyacyl-ACP dehydratase</fullName>
    </alternativeName>
</protein>
<evidence type="ECO:0000255" key="1">
    <source>
        <dbReference type="HAMAP-Rule" id="MF_00406"/>
    </source>
</evidence>
<sequence length="151" mass="17052">MTVTTERIARIIESKEIMTLLPHRYPFLLVDRVTDYEEGKWLTAIKNVSVNEPCFTGHFPDQPILPGVLILEALAQAMGILAFKTHELSNKELFYFAGVDEARFKRPILPGDQMMLKVEVIRERRGITAFTGVASVNGEVACEAKLMCARR</sequence>
<accession>B0UW60</accession>
<organism>
    <name type="scientific">Histophilus somni (strain 2336)</name>
    <name type="common">Haemophilus somnus</name>
    <dbReference type="NCBI Taxonomy" id="228400"/>
    <lineage>
        <taxon>Bacteria</taxon>
        <taxon>Pseudomonadati</taxon>
        <taxon>Pseudomonadota</taxon>
        <taxon>Gammaproteobacteria</taxon>
        <taxon>Pasteurellales</taxon>
        <taxon>Pasteurellaceae</taxon>
        <taxon>Histophilus</taxon>
    </lineage>
</organism>
<comment type="function">
    <text evidence="1">Involved in unsaturated fatty acids biosynthesis. Catalyzes the dehydration of short chain beta-hydroxyacyl-ACPs and long chain saturated and unsaturated beta-hydroxyacyl-ACPs.</text>
</comment>
<comment type="catalytic activity">
    <reaction evidence="1">
        <text>a (3R)-hydroxyacyl-[ACP] = a (2E)-enoyl-[ACP] + H2O</text>
        <dbReference type="Rhea" id="RHEA:13097"/>
        <dbReference type="Rhea" id="RHEA-COMP:9925"/>
        <dbReference type="Rhea" id="RHEA-COMP:9945"/>
        <dbReference type="ChEBI" id="CHEBI:15377"/>
        <dbReference type="ChEBI" id="CHEBI:78784"/>
        <dbReference type="ChEBI" id="CHEBI:78827"/>
        <dbReference type="EC" id="4.2.1.59"/>
    </reaction>
</comment>
<comment type="subcellular location">
    <subcellularLocation>
        <location evidence="1">Cytoplasm</location>
    </subcellularLocation>
</comment>
<comment type="similarity">
    <text evidence="1">Belongs to the thioester dehydratase family. FabZ subfamily.</text>
</comment>
<keyword id="KW-0963">Cytoplasm</keyword>
<keyword id="KW-0441">Lipid A biosynthesis</keyword>
<keyword id="KW-0444">Lipid biosynthesis</keyword>
<keyword id="KW-0443">Lipid metabolism</keyword>
<keyword id="KW-0456">Lyase</keyword>